<dbReference type="EMBL" id="CU928161">
    <property type="protein sequence ID" value="CAR05905.1"/>
    <property type="molecule type" value="Genomic_DNA"/>
</dbReference>
<dbReference type="RefSeq" id="WP_001298688.1">
    <property type="nucleotide sequence ID" value="NC_011742.1"/>
</dbReference>
<dbReference type="SMR" id="B7MKX4"/>
<dbReference type="KEGG" id="ecz:ECS88_4756"/>
<dbReference type="HOGENOM" id="CLU_004131_5_1_6"/>
<dbReference type="Proteomes" id="UP000000747">
    <property type="component" value="Chromosome"/>
</dbReference>
<dbReference type="GO" id="GO:0032300">
    <property type="term" value="C:mismatch repair complex"/>
    <property type="evidence" value="ECO:0007669"/>
    <property type="project" value="InterPro"/>
</dbReference>
<dbReference type="GO" id="GO:0005524">
    <property type="term" value="F:ATP binding"/>
    <property type="evidence" value="ECO:0007669"/>
    <property type="project" value="InterPro"/>
</dbReference>
<dbReference type="GO" id="GO:0016887">
    <property type="term" value="F:ATP hydrolysis activity"/>
    <property type="evidence" value="ECO:0007669"/>
    <property type="project" value="InterPro"/>
</dbReference>
<dbReference type="GO" id="GO:0140664">
    <property type="term" value="F:ATP-dependent DNA damage sensor activity"/>
    <property type="evidence" value="ECO:0007669"/>
    <property type="project" value="InterPro"/>
</dbReference>
<dbReference type="GO" id="GO:0030983">
    <property type="term" value="F:mismatched DNA binding"/>
    <property type="evidence" value="ECO:0007669"/>
    <property type="project" value="InterPro"/>
</dbReference>
<dbReference type="GO" id="GO:0006298">
    <property type="term" value="P:mismatch repair"/>
    <property type="evidence" value="ECO:0007669"/>
    <property type="project" value="UniProtKB-UniRule"/>
</dbReference>
<dbReference type="CDD" id="cd16926">
    <property type="entry name" value="HATPase_MutL-MLH-PMS-like"/>
    <property type="match status" value="1"/>
</dbReference>
<dbReference type="CDD" id="cd03482">
    <property type="entry name" value="MutL_Trans_MutL"/>
    <property type="match status" value="1"/>
</dbReference>
<dbReference type="FunFam" id="3.30.230.10:FF:000013">
    <property type="entry name" value="DNA mismatch repair endonuclease MutL"/>
    <property type="match status" value="1"/>
</dbReference>
<dbReference type="FunFam" id="3.30.565.10:FF:000003">
    <property type="entry name" value="DNA mismatch repair endonuclease MutL"/>
    <property type="match status" value="1"/>
</dbReference>
<dbReference type="FunFam" id="3.30.1370.100:FF:000002">
    <property type="entry name" value="DNA mismatch repair protein MutL"/>
    <property type="match status" value="1"/>
</dbReference>
<dbReference type="Gene3D" id="3.30.230.10">
    <property type="match status" value="1"/>
</dbReference>
<dbReference type="Gene3D" id="3.30.565.10">
    <property type="entry name" value="Histidine kinase-like ATPase, C-terminal domain"/>
    <property type="match status" value="1"/>
</dbReference>
<dbReference type="Gene3D" id="3.30.1540.20">
    <property type="entry name" value="MutL, C-terminal domain, dimerisation subdomain"/>
    <property type="match status" value="1"/>
</dbReference>
<dbReference type="Gene3D" id="3.30.1370.100">
    <property type="entry name" value="MutL, C-terminal domain, regulatory subdomain"/>
    <property type="match status" value="1"/>
</dbReference>
<dbReference type="HAMAP" id="MF_00149">
    <property type="entry name" value="DNA_mis_repair"/>
    <property type="match status" value="1"/>
</dbReference>
<dbReference type="InterPro" id="IPR014762">
    <property type="entry name" value="DNA_mismatch_repair_CS"/>
</dbReference>
<dbReference type="InterPro" id="IPR020667">
    <property type="entry name" value="DNA_mismatch_repair_MutL"/>
</dbReference>
<dbReference type="InterPro" id="IPR013507">
    <property type="entry name" value="DNA_mismatch_S5_2-like"/>
</dbReference>
<dbReference type="InterPro" id="IPR036890">
    <property type="entry name" value="HATPase_C_sf"/>
</dbReference>
<dbReference type="InterPro" id="IPR002099">
    <property type="entry name" value="MutL/Mlh/PMS"/>
</dbReference>
<dbReference type="InterPro" id="IPR038973">
    <property type="entry name" value="MutL/Mlh/Pms-like"/>
</dbReference>
<dbReference type="InterPro" id="IPR014790">
    <property type="entry name" value="MutL_C"/>
</dbReference>
<dbReference type="InterPro" id="IPR042120">
    <property type="entry name" value="MutL_C_dimsub"/>
</dbReference>
<dbReference type="InterPro" id="IPR042121">
    <property type="entry name" value="MutL_C_regsub"/>
</dbReference>
<dbReference type="InterPro" id="IPR037198">
    <property type="entry name" value="MutL_C_sf"/>
</dbReference>
<dbReference type="InterPro" id="IPR020568">
    <property type="entry name" value="Ribosomal_Su5_D2-typ_SF"/>
</dbReference>
<dbReference type="InterPro" id="IPR014721">
    <property type="entry name" value="Ribsml_uS5_D2-typ_fold_subgr"/>
</dbReference>
<dbReference type="NCBIfam" id="TIGR00585">
    <property type="entry name" value="mutl"/>
    <property type="match status" value="1"/>
</dbReference>
<dbReference type="NCBIfam" id="NF000948">
    <property type="entry name" value="PRK00095.1-1"/>
    <property type="match status" value="1"/>
</dbReference>
<dbReference type="PANTHER" id="PTHR10073">
    <property type="entry name" value="DNA MISMATCH REPAIR PROTEIN MLH, PMS, MUTL"/>
    <property type="match status" value="1"/>
</dbReference>
<dbReference type="PANTHER" id="PTHR10073:SF12">
    <property type="entry name" value="DNA MISMATCH REPAIR PROTEIN MLH1"/>
    <property type="match status" value="1"/>
</dbReference>
<dbReference type="Pfam" id="PF01119">
    <property type="entry name" value="DNA_mis_repair"/>
    <property type="match status" value="1"/>
</dbReference>
<dbReference type="Pfam" id="PF13589">
    <property type="entry name" value="HATPase_c_3"/>
    <property type="match status" value="1"/>
</dbReference>
<dbReference type="Pfam" id="PF08676">
    <property type="entry name" value="MutL_C"/>
    <property type="match status" value="1"/>
</dbReference>
<dbReference type="SMART" id="SM01340">
    <property type="entry name" value="DNA_mis_repair"/>
    <property type="match status" value="1"/>
</dbReference>
<dbReference type="SMART" id="SM00853">
    <property type="entry name" value="MutL_C"/>
    <property type="match status" value="1"/>
</dbReference>
<dbReference type="SUPFAM" id="SSF55874">
    <property type="entry name" value="ATPase domain of HSP90 chaperone/DNA topoisomerase II/histidine kinase"/>
    <property type="match status" value="1"/>
</dbReference>
<dbReference type="SUPFAM" id="SSF118116">
    <property type="entry name" value="DNA mismatch repair protein MutL"/>
    <property type="match status" value="1"/>
</dbReference>
<dbReference type="SUPFAM" id="SSF54211">
    <property type="entry name" value="Ribosomal protein S5 domain 2-like"/>
    <property type="match status" value="1"/>
</dbReference>
<dbReference type="PROSITE" id="PS00058">
    <property type="entry name" value="DNA_MISMATCH_REPAIR_1"/>
    <property type="match status" value="1"/>
</dbReference>
<proteinExistence type="inferred from homology"/>
<evidence type="ECO:0000255" key="1">
    <source>
        <dbReference type="HAMAP-Rule" id="MF_00149"/>
    </source>
</evidence>
<evidence type="ECO:0000256" key="2">
    <source>
        <dbReference type="SAM" id="MobiDB-lite"/>
    </source>
</evidence>
<organism>
    <name type="scientific">Escherichia coli O45:K1 (strain S88 / ExPEC)</name>
    <dbReference type="NCBI Taxonomy" id="585035"/>
    <lineage>
        <taxon>Bacteria</taxon>
        <taxon>Pseudomonadati</taxon>
        <taxon>Pseudomonadota</taxon>
        <taxon>Gammaproteobacteria</taxon>
        <taxon>Enterobacterales</taxon>
        <taxon>Enterobacteriaceae</taxon>
        <taxon>Escherichia</taxon>
    </lineage>
</organism>
<sequence>MPIQVLPPQLANQIAAGEVVERPASVVKELVENSLDAGATRIDIDIERGGAKLIRIRDNGCGIKKDELALALARHATSKIASLDDLEAIISLGFRGEALASISSVSRLTLTSRTAEQQEAWQAYAEGRDMDVTVKPAAHPVGTTLEVLDLFYNTPARRKFLRTEKTEFNHIDEIIRRIALARFDVTISLSHNGKIVRQYRAVPEGGQKERRLGAICGTAFLEQALAIEWQHGDLTLRGWVADPNHTTPALAEIQYCYVNGRMMRDRLINHAIRQACEDKLGADQQPAFVLYLEIDPHQVDVNVHPAKHEVRFHQSRLVHDFIYQGVLSVLQQQLETPLPLDDEPQPAPRAIPENRVAAGRNHFAEPAVREPVAPRYSPAPASGSRPAASWPNAQPGYQKQQGEVYRQLLQTPAPMQKPKAPEPQEPALAANSQSFGRVLTIVHSDCALLERDGNISLLSLPVAERWLRQAQLTPGEVPVCAQPLLIPLRLKVSGEEKSALEKAQSALAELGIDFQSDAQHVTIRAVPLPLRQQNLQILIPELIGYLAKQSVFEPGNIAQWIARNLMSEHAQWSMAQAITLLADVERLCPQLVKTPPGGLLQSVDLHPAIKALKDE</sequence>
<reference key="1">
    <citation type="journal article" date="2009" name="PLoS Genet.">
        <title>Organised genome dynamics in the Escherichia coli species results in highly diverse adaptive paths.</title>
        <authorList>
            <person name="Touchon M."/>
            <person name="Hoede C."/>
            <person name="Tenaillon O."/>
            <person name="Barbe V."/>
            <person name="Baeriswyl S."/>
            <person name="Bidet P."/>
            <person name="Bingen E."/>
            <person name="Bonacorsi S."/>
            <person name="Bouchier C."/>
            <person name="Bouvet O."/>
            <person name="Calteau A."/>
            <person name="Chiapello H."/>
            <person name="Clermont O."/>
            <person name="Cruveiller S."/>
            <person name="Danchin A."/>
            <person name="Diard M."/>
            <person name="Dossat C."/>
            <person name="Karoui M.E."/>
            <person name="Frapy E."/>
            <person name="Garry L."/>
            <person name="Ghigo J.M."/>
            <person name="Gilles A.M."/>
            <person name="Johnson J."/>
            <person name="Le Bouguenec C."/>
            <person name="Lescat M."/>
            <person name="Mangenot S."/>
            <person name="Martinez-Jehanne V."/>
            <person name="Matic I."/>
            <person name="Nassif X."/>
            <person name="Oztas S."/>
            <person name="Petit M.A."/>
            <person name="Pichon C."/>
            <person name="Rouy Z."/>
            <person name="Ruf C.S."/>
            <person name="Schneider D."/>
            <person name="Tourret J."/>
            <person name="Vacherie B."/>
            <person name="Vallenet D."/>
            <person name="Medigue C."/>
            <person name="Rocha E.P.C."/>
            <person name="Denamur E."/>
        </authorList>
    </citation>
    <scope>NUCLEOTIDE SEQUENCE [LARGE SCALE GENOMIC DNA]</scope>
    <source>
        <strain>S88 / ExPEC</strain>
    </source>
</reference>
<protein>
    <recommendedName>
        <fullName evidence="1">DNA mismatch repair protein MutL</fullName>
    </recommendedName>
</protein>
<name>MUTL_ECO45</name>
<comment type="function">
    <text evidence="1">This protein is involved in the repair of mismatches in DNA. It is required for dam-dependent methyl-directed DNA mismatch repair. May act as a 'molecular matchmaker', a protein that promotes the formation of a stable complex between two or more DNA-binding proteins in an ATP-dependent manner without itself being part of a final effector complex.</text>
</comment>
<comment type="similarity">
    <text evidence="1">Belongs to the DNA mismatch repair MutL/HexB family.</text>
</comment>
<keyword id="KW-0227">DNA damage</keyword>
<keyword id="KW-0234">DNA repair</keyword>
<keyword id="KW-1185">Reference proteome</keyword>
<accession>B7MKX4</accession>
<feature type="chain" id="PRO_1000192175" description="DNA mismatch repair protein MutL">
    <location>
        <begin position="1"/>
        <end position="615"/>
    </location>
</feature>
<feature type="region of interest" description="Disordered" evidence="2">
    <location>
        <begin position="362"/>
        <end position="397"/>
    </location>
</feature>
<feature type="compositionally biased region" description="Low complexity" evidence="2">
    <location>
        <begin position="373"/>
        <end position="391"/>
    </location>
</feature>
<gene>
    <name evidence="1" type="primary">mutL</name>
    <name type="ordered locus">ECS88_4756</name>
</gene>